<reference key="1">
    <citation type="journal article" date="2004" name="Plant Physiol.">
        <title>Structure and expression profile of the Arabidopsis PHO1 gene family indicates a broad role in inorganic phosphate homeostasis.</title>
        <authorList>
            <person name="Wang Y."/>
            <person name="Ribot C."/>
            <person name="Rezzonico E."/>
            <person name="Poirier Y."/>
        </authorList>
    </citation>
    <scope>NUCLEOTIDE SEQUENCE [MRNA]</scope>
    <scope>TISSUE SPECIFICITY</scope>
    <scope>INDUCTION</scope>
    <scope>GENE FAMILY</scope>
    <scope>NOMENCLATURE</scope>
</reference>
<reference key="2">
    <citation type="journal article" date="2000" name="Nature">
        <title>Sequence and analysis of chromosome 1 of the plant Arabidopsis thaliana.</title>
        <authorList>
            <person name="Theologis A."/>
            <person name="Ecker J.R."/>
            <person name="Palm C.J."/>
            <person name="Federspiel N.A."/>
            <person name="Kaul S."/>
            <person name="White O."/>
            <person name="Alonso J."/>
            <person name="Altafi H."/>
            <person name="Araujo R."/>
            <person name="Bowman C.L."/>
            <person name="Brooks S.Y."/>
            <person name="Buehler E."/>
            <person name="Chan A."/>
            <person name="Chao Q."/>
            <person name="Chen H."/>
            <person name="Cheuk R.F."/>
            <person name="Chin C.W."/>
            <person name="Chung M.K."/>
            <person name="Conn L."/>
            <person name="Conway A.B."/>
            <person name="Conway A.R."/>
            <person name="Creasy T.H."/>
            <person name="Dewar K."/>
            <person name="Dunn P."/>
            <person name="Etgu P."/>
            <person name="Feldblyum T.V."/>
            <person name="Feng J.-D."/>
            <person name="Fong B."/>
            <person name="Fujii C.Y."/>
            <person name="Gill J.E."/>
            <person name="Goldsmith A.D."/>
            <person name="Haas B."/>
            <person name="Hansen N.F."/>
            <person name="Hughes B."/>
            <person name="Huizar L."/>
            <person name="Hunter J.L."/>
            <person name="Jenkins J."/>
            <person name="Johnson-Hopson C."/>
            <person name="Khan S."/>
            <person name="Khaykin E."/>
            <person name="Kim C.J."/>
            <person name="Koo H.L."/>
            <person name="Kremenetskaia I."/>
            <person name="Kurtz D.B."/>
            <person name="Kwan A."/>
            <person name="Lam B."/>
            <person name="Langin-Hooper S."/>
            <person name="Lee A."/>
            <person name="Lee J.M."/>
            <person name="Lenz C.A."/>
            <person name="Li J.H."/>
            <person name="Li Y.-P."/>
            <person name="Lin X."/>
            <person name="Liu S.X."/>
            <person name="Liu Z.A."/>
            <person name="Luros J.S."/>
            <person name="Maiti R."/>
            <person name="Marziali A."/>
            <person name="Militscher J."/>
            <person name="Miranda M."/>
            <person name="Nguyen M."/>
            <person name="Nierman W.C."/>
            <person name="Osborne B.I."/>
            <person name="Pai G."/>
            <person name="Peterson J."/>
            <person name="Pham P.K."/>
            <person name="Rizzo M."/>
            <person name="Rooney T."/>
            <person name="Rowley D."/>
            <person name="Sakano H."/>
            <person name="Salzberg S.L."/>
            <person name="Schwartz J.R."/>
            <person name="Shinn P."/>
            <person name="Southwick A.M."/>
            <person name="Sun H."/>
            <person name="Tallon L.J."/>
            <person name="Tambunga G."/>
            <person name="Toriumi M.J."/>
            <person name="Town C.D."/>
            <person name="Utterback T."/>
            <person name="Van Aken S."/>
            <person name="Vaysberg M."/>
            <person name="Vysotskaia V.S."/>
            <person name="Walker M."/>
            <person name="Wu D."/>
            <person name="Yu G."/>
            <person name="Fraser C.M."/>
            <person name="Venter J.C."/>
            <person name="Davis R.W."/>
        </authorList>
    </citation>
    <scope>NUCLEOTIDE SEQUENCE [LARGE SCALE GENOMIC DNA]</scope>
    <source>
        <strain>cv. Columbia</strain>
    </source>
</reference>
<reference key="3">
    <citation type="journal article" date="2017" name="Plant J.">
        <title>Araport11: a complete reannotation of the Arabidopsis thaliana reference genome.</title>
        <authorList>
            <person name="Cheng C.Y."/>
            <person name="Krishnakumar V."/>
            <person name="Chan A.P."/>
            <person name="Thibaud-Nissen F."/>
            <person name="Schobel S."/>
            <person name="Town C.D."/>
        </authorList>
    </citation>
    <scope>GENOME REANNOTATION</scope>
    <source>
        <strain>cv. Columbia</strain>
    </source>
</reference>
<name>PHO13_ARATH</name>
<organism>
    <name type="scientific">Arabidopsis thaliana</name>
    <name type="common">Mouse-ear cress</name>
    <dbReference type="NCBI Taxonomy" id="3702"/>
    <lineage>
        <taxon>Eukaryota</taxon>
        <taxon>Viridiplantae</taxon>
        <taxon>Streptophyta</taxon>
        <taxon>Embryophyta</taxon>
        <taxon>Tracheophyta</taxon>
        <taxon>Spermatophyta</taxon>
        <taxon>Magnoliopsida</taxon>
        <taxon>eudicotyledons</taxon>
        <taxon>Gunneridae</taxon>
        <taxon>Pentapetalae</taxon>
        <taxon>rosids</taxon>
        <taxon>malvids</taxon>
        <taxon>Brassicales</taxon>
        <taxon>Brassicaceae</taxon>
        <taxon>Camelineae</taxon>
        <taxon>Arabidopsis</taxon>
    </lineage>
</organism>
<sequence>MKFGKEFSSQMVPEWQQAYMDYDFLKTLLKEIITFKRRTNNAPSHGGAKTGGGLNRKLTLYRAFSGLVSTPRHKRSNSSHDVEEGVQLTGSMRSGPILVNTTASHGYETTFLMAAEEGGEYELVFFRRLDDEFNKVDKFYRKKVEEVLKEAAMLNKQMDALIAFRVKVENPDGWRWEERTVEMTRLASDIATSAAALSASTPAGAKSMKVRSQEHMEAIQEGGSSRAGLMEDDEEDEDEQNETSVVSTGAIDNETTTSRMRGARPSPIDVLGRVKINNTKETPRSTIKGVLKVSKQTDLKFSRENLMKVEESLKRAFIEFYQKLRLLKSYSFLNVLAFSKILKKYDKITSRDATKPYMKVVDSSYLGSSDEVMRLMERVEATFIKHFANANRAKAMNILRPKAKRERHRITFSTGFSAGCVFSLIVALVAIIRTRNLLEMEGQKEYMNTMFPLYSLFGFIVLHIIVYAANIYYWRRYRVNYSFIFGFKQGTELGYRQVLLVGFSIGVLALLCVLANLDMEADPKTKAYQARTEILPLILLAAMFIVLVLPFNYFYRSSRFFFLTCLFHCLAAPLYKVTLPDFFLGDQLTSQVQAIRSIEFYICYYGWGDFRHRKSTCKESDVYNTFFFIVAVIPYVSRLLQCLRRLFEEKNPEQGYNGLKYFLTIVAVCLRTAYSIQKGQVAWRVLAAVFSFIAAIFCTYWDFVHDWGLLNRTSKNRWLRDKLLVPQKKVYFIAMVLNVLLRFAWIQTVLDFNFSFMHRQTMVAIVASLEIIRRGIWNFFRLENEHLNNVGKYRAFKSVPLPFNYDEDDDKDN</sequence>
<accession>Q6R8G7</accession>
<accession>Q9LMF4</accession>
<accession>Q9XI83</accession>
<feature type="chain" id="PRO_0000398157" description="Phosphate transporter PHO1 homolog 3">
    <location>
        <begin position="1"/>
        <end position="813"/>
    </location>
</feature>
<feature type="topological domain" description="Cytoplasmic" evidence="2">
    <location>
        <begin position="1"/>
        <end position="411"/>
    </location>
</feature>
<feature type="transmembrane region" description="Helical" evidence="2">
    <location>
        <begin position="412"/>
        <end position="432"/>
    </location>
</feature>
<feature type="topological domain" description="Extracellular" evidence="2">
    <location>
        <begin position="433"/>
        <end position="450"/>
    </location>
</feature>
<feature type="transmembrane region" description="Helical" evidence="2">
    <location>
        <begin position="451"/>
        <end position="471"/>
    </location>
</feature>
<feature type="topological domain" description="Cytoplasmic" evidence="2">
    <location>
        <begin position="472"/>
        <end position="496"/>
    </location>
</feature>
<feature type="transmembrane region" description="Helical" evidence="2">
    <location>
        <begin position="497"/>
        <end position="517"/>
    </location>
</feature>
<feature type="topological domain" description="Extracellular" evidence="2">
    <location>
        <begin position="518"/>
        <end position="533"/>
    </location>
</feature>
<feature type="transmembrane region" description="Helical" evidence="2">
    <location>
        <begin position="534"/>
        <end position="554"/>
    </location>
</feature>
<feature type="topological domain" description="Cytoplasmic" evidence="2">
    <location>
        <begin position="555"/>
        <end position="684"/>
    </location>
</feature>
<feature type="transmembrane region" description="Helical" evidence="2">
    <location>
        <begin position="685"/>
        <end position="705"/>
    </location>
</feature>
<feature type="topological domain" description="Extracellular" evidence="2">
    <location>
        <begin position="706"/>
        <end position="729"/>
    </location>
</feature>
<feature type="transmembrane region" description="Helical" evidence="2">
    <location>
        <begin position="730"/>
        <end position="750"/>
    </location>
</feature>
<feature type="topological domain" description="Cytoplasmic" evidence="2">
    <location>
        <begin position="751"/>
        <end position="813"/>
    </location>
</feature>
<feature type="domain" description="SPX" evidence="4">
    <location>
        <begin position="1"/>
        <end position="359"/>
    </location>
</feature>
<feature type="domain" description="EXS" evidence="3">
    <location>
        <begin position="618"/>
        <end position="813"/>
    </location>
</feature>
<feature type="region of interest" description="Disordered" evidence="5">
    <location>
        <begin position="214"/>
        <end position="266"/>
    </location>
</feature>
<feature type="compositionally biased region" description="Acidic residues" evidence="5">
    <location>
        <begin position="230"/>
        <end position="241"/>
    </location>
</feature>
<feature type="sequence conflict" description="In Ref. 1; AAR99485." evidence="7" ref="1">
    <original>E</original>
    <variation>V</variation>
    <location>
        <position position="377"/>
    </location>
</feature>
<comment type="function">
    <text evidence="1">May transport inorganic phosphate (Pi).</text>
</comment>
<comment type="subcellular location">
    <subcellularLocation>
        <location evidence="7">Cell membrane</location>
        <topology evidence="7">Multi-pass membrane protein</topology>
    </subcellularLocation>
</comment>
<comment type="tissue specificity">
    <text evidence="6">Expressed in vascular cylinder of roots, leaves and filaments. Expressed in receptacle and stigma apex.</text>
</comment>
<comment type="induction">
    <text evidence="6">Not induced by Pi deficiency.</text>
</comment>
<comment type="similarity">
    <text evidence="7">Belongs to the SYG1 (TC 2.A.94) family.</text>
</comment>
<comment type="sequence caution" evidence="7">
    <conflict type="erroneous gene model prediction">
        <sequence resource="EMBL-CDS" id="AAD39290"/>
    </conflict>
</comment>
<comment type="sequence caution" evidence="7">
    <conflict type="erroneous gene model prediction">
        <sequence resource="EMBL-CDS" id="AAF79407"/>
    </conflict>
</comment>
<gene>
    <name type="primary">PHO1;H3</name>
    <name type="ordered locus">At1g14040</name>
    <name type="ORF">F16A14.26</name>
    <name type="ORF">F7A19.13</name>
</gene>
<dbReference type="EMBL" id="AY507955">
    <property type="protein sequence ID" value="AAR99485.1"/>
    <property type="molecule type" value="mRNA"/>
</dbReference>
<dbReference type="EMBL" id="AC007576">
    <property type="protein sequence ID" value="AAD39290.1"/>
    <property type="status" value="ALT_SEQ"/>
    <property type="molecule type" value="Genomic_DNA"/>
</dbReference>
<dbReference type="EMBL" id="AC068197">
    <property type="protein sequence ID" value="AAF79407.1"/>
    <property type="status" value="ALT_SEQ"/>
    <property type="molecule type" value="Genomic_DNA"/>
</dbReference>
<dbReference type="EMBL" id="CP002684">
    <property type="protein sequence ID" value="AEE29101.1"/>
    <property type="molecule type" value="Genomic_DNA"/>
</dbReference>
<dbReference type="PIR" id="G86273">
    <property type="entry name" value="G86273"/>
</dbReference>
<dbReference type="RefSeq" id="NP_172857.2">
    <property type="nucleotide sequence ID" value="NM_101270.3"/>
</dbReference>
<dbReference type="SMR" id="Q6R8G7"/>
<dbReference type="FunCoup" id="Q6R8G7">
    <property type="interactions" value="3333"/>
</dbReference>
<dbReference type="STRING" id="3702.Q6R8G7"/>
<dbReference type="iPTMnet" id="Q6R8G7"/>
<dbReference type="PaxDb" id="3702-AT1G14040.1"/>
<dbReference type="ProteomicsDB" id="234907"/>
<dbReference type="EnsemblPlants" id="AT1G14040.1">
    <property type="protein sequence ID" value="AT1G14040.1"/>
    <property type="gene ID" value="AT1G14040"/>
</dbReference>
<dbReference type="GeneID" id="837965"/>
<dbReference type="Gramene" id="AT1G14040.1">
    <property type="protein sequence ID" value="AT1G14040.1"/>
    <property type="gene ID" value="AT1G14040"/>
</dbReference>
<dbReference type="KEGG" id="ath:AT1G14040"/>
<dbReference type="Araport" id="AT1G14040"/>
<dbReference type="TAIR" id="AT1G14040">
    <property type="gene designation" value="PHO1"/>
</dbReference>
<dbReference type="eggNOG" id="KOG1162">
    <property type="taxonomic scope" value="Eukaryota"/>
</dbReference>
<dbReference type="HOGENOM" id="CLU_006116_2_0_1"/>
<dbReference type="InParanoid" id="Q6R8G7"/>
<dbReference type="OMA" id="NAYMDYE"/>
<dbReference type="PhylomeDB" id="Q6R8G7"/>
<dbReference type="PRO" id="PR:Q6R8G7"/>
<dbReference type="Proteomes" id="UP000006548">
    <property type="component" value="Chromosome 1"/>
</dbReference>
<dbReference type="ExpressionAtlas" id="Q6R8G7">
    <property type="expression patterns" value="baseline and differential"/>
</dbReference>
<dbReference type="GO" id="GO:0005794">
    <property type="term" value="C:Golgi apparatus"/>
    <property type="evidence" value="ECO:0000314"/>
    <property type="project" value="TAIR"/>
</dbReference>
<dbReference type="GO" id="GO:0005886">
    <property type="term" value="C:plasma membrane"/>
    <property type="evidence" value="ECO:0007669"/>
    <property type="project" value="UniProtKB-SubCell"/>
</dbReference>
<dbReference type="GO" id="GO:0005802">
    <property type="term" value="C:trans-Golgi network"/>
    <property type="evidence" value="ECO:0000314"/>
    <property type="project" value="TAIR"/>
</dbReference>
<dbReference type="GO" id="GO:0055062">
    <property type="term" value="P:phosphate ion homeostasis"/>
    <property type="evidence" value="ECO:0000315"/>
    <property type="project" value="TAIR"/>
</dbReference>
<dbReference type="GO" id="GO:0006817">
    <property type="term" value="P:phosphate ion transport"/>
    <property type="evidence" value="ECO:0007669"/>
    <property type="project" value="UniProtKB-KW"/>
</dbReference>
<dbReference type="CDD" id="cd14476">
    <property type="entry name" value="SPX_PHO1_like"/>
    <property type="match status" value="1"/>
</dbReference>
<dbReference type="InterPro" id="IPR004342">
    <property type="entry name" value="EXS_C"/>
</dbReference>
<dbReference type="InterPro" id="IPR034092">
    <property type="entry name" value="PHO1_SPX"/>
</dbReference>
<dbReference type="InterPro" id="IPR004331">
    <property type="entry name" value="SPX_dom"/>
</dbReference>
<dbReference type="PANTHER" id="PTHR10783:SF4">
    <property type="entry name" value="PHOSPHATE TRANSPORTER PHO1 HOMOLOG 3"/>
    <property type="match status" value="1"/>
</dbReference>
<dbReference type="PANTHER" id="PTHR10783">
    <property type="entry name" value="XENOTROPIC AND POLYTROPIC RETROVIRUS RECEPTOR 1-RELATED"/>
    <property type="match status" value="1"/>
</dbReference>
<dbReference type="Pfam" id="PF03124">
    <property type="entry name" value="EXS"/>
    <property type="match status" value="1"/>
</dbReference>
<dbReference type="Pfam" id="PF03105">
    <property type="entry name" value="SPX"/>
    <property type="match status" value="1"/>
</dbReference>
<dbReference type="PROSITE" id="PS51380">
    <property type="entry name" value="EXS"/>
    <property type="match status" value="1"/>
</dbReference>
<dbReference type="PROSITE" id="PS51382">
    <property type="entry name" value="SPX"/>
    <property type="match status" value="1"/>
</dbReference>
<proteinExistence type="evidence at transcript level"/>
<protein>
    <recommendedName>
        <fullName>Phosphate transporter PHO1 homolog 3</fullName>
    </recommendedName>
    <alternativeName>
        <fullName>Protein PHO1 homolog 3</fullName>
        <shortName>AtPHO1;H3</shortName>
    </alternativeName>
</protein>
<keyword id="KW-1003">Cell membrane</keyword>
<keyword id="KW-0472">Membrane</keyword>
<keyword id="KW-0592">Phosphate transport</keyword>
<keyword id="KW-1185">Reference proteome</keyword>
<keyword id="KW-0812">Transmembrane</keyword>
<keyword id="KW-1133">Transmembrane helix</keyword>
<keyword id="KW-0813">Transport</keyword>
<evidence type="ECO:0000250" key="1"/>
<evidence type="ECO:0000255" key="2"/>
<evidence type="ECO:0000255" key="3">
    <source>
        <dbReference type="PROSITE-ProRule" id="PRU00712"/>
    </source>
</evidence>
<evidence type="ECO:0000255" key="4">
    <source>
        <dbReference type="PROSITE-ProRule" id="PRU00714"/>
    </source>
</evidence>
<evidence type="ECO:0000256" key="5">
    <source>
        <dbReference type="SAM" id="MobiDB-lite"/>
    </source>
</evidence>
<evidence type="ECO:0000269" key="6">
    <source>
    </source>
</evidence>
<evidence type="ECO:0000305" key="7"/>